<sequence>MTTTHIDQVSVSTQASVYFDGKCISHGVTLADGTKKSVGVILPATLTFNTGAPEVMECVAGSCDYKLPGSEVWLKSKPGDKFSIPGNTPFDIRVTEPYHYICHFG</sequence>
<comment type="function">
    <text evidence="1">Catalyzes the phosphorolysis of diverse nucleosides, yielding D-ribose 1-phosphate and the respective free bases. Can use uridine, adenosine, guanosine, cytidine, thymidine, inosine and xanthosine as substrates. Also catalyzes the reverse reactions.</text>
</comment>
<comment type="catalytic activity">
    <reaction evidence="1">
        <text>a purine D-ribonucleoside + phosphate = a purine nucleobase + alpha-D-ribose 1-phosphate</text>
        <dbReference type="Rhea" id="RHEA:19805"/>
        <dbReference type="ChEBI" id="CHEBI:26386"/>
        <dbReference type="ChEBI" id="CHEBI:43474"/>
        <dbReference type="ChEBI" id="CHEBI:57720"/>
        <dbReference type="ChEBI" id="CHEBI:142355"/>
        <dbReference type="EC" id="2.4.2.1"/>
    </reaction>
</comment>
<comment type="catalytic activity">
    <reaction evidence="1">
        <text>adenosine + phosphate = alpha-D-ribose 1-phosphate + adenine</text>
        <dbReference type="Rhea" id="RHEA:27642"/>
        <dbReference type="ChEBI" id="CHEBI:16335"/>
        <dbReference type="ChEBI" id="CHEBI:16708"/>
        <dbReference type="ChEBI" id="CHEBI:43474"/>
        <dbReference type="ChEBI" id="CHEBI:57720"/>
        <dbReference type="EC" id="2.4.2.1"/>
    </reaction>
</comment>
<comment type="catalytic activity">
    <reaction evidence="1">
        <text>cytidine + phosphate = cytosine + alpha-D-ribose 1-phosphate</text>
        <dbReference type="Rhea" id="RHEA:52540"/>
        <dbReference type="ChEBI" id="CHEBI:16040"/>
        <dbReference type="ChEBI" id="CHEBI:17562"/>
        <dbReference type="ChEBI" id="CHEBI:43474"/>
        <dbReference type="ChEBI" id="CHEBI:57720"/>
        <dbReference type="EC" id="2.4.2.2"/>
    </reaction>
</comment>
<comment type="catalytic activity">
    <reaction evidence="1">
        <text>guanosine + phosphate = alpha-D-ribose 1-phosphate + guanine</text>
        <dbReference type="Rhea" id="RHEA:13233"/>
        <dbReference type="ChEBI" id="CHEBI:16235"/>
        <dbReference type="ChEBI" id="CHEBI:16750"/>
        <dbReference type="ChEBI" id="CHEBI:43474"/>
        <dbReference type="ChEBI" id="CHEBI:57720"/>
        <dbReference type="EC" id="2.4.2.1"/>
    </reaction>
</comment>
<comment type="catalytic activity">
    <reaction evidence="1">
        <text>inosine + phosphate = alpha-D-ribose 1-phosphate + hypoxanthine</text>
        <dbReference type="Rhea" id="RHEA:27646"/>
        <dbReference type="ChEBI" id="CHEBI:17368"/>
        <dbReference type="ChEBI" id="CHEBI:17596"/>
        <dbReference type="ChEBI" id="CHEBI:43474"/>
        <dbReference type="ChEBI" id="CHEBI:57720"/>
        <dbReference type="EC" id="2.4.2.1"/>
    </reaction>
</comment>
<comment type="catalytic activity">
    <reaction evidence="1">
        <text>thymidine + phosphate = 2-deoxy-alpha-D-ribose 1-phosphate + thymine</text>
        <dbReference type="Rhea" id="RHEA:16037"/>
        <dbReference type="ChEBI" id="CHEBI:17748"/>
        <dbReference type="ChEBI" id="CHEBI:17821"/>
        <dbReference type="ChEBI" id="CHEBI:43474"/>
        <dbReference type="ChEBI" id="CHEBI:57259"/>
        <dbReference type="EC" id="2.4.2.2"/>
    </reaction>
</comment>
<comment type="catalytic activity">
    <reaction evidence="1">
        <text>uridine + phosphate = alpha-D-ribose 1-phosphate + uracil</text>
        <dbReference type="Rhea" id="RHEA:24388"/>
        <dbReference type="ChEBI" id="CHEBI:16704"/>
        <dbReference type="ChEBI" id="CHEBI:17568"/>
        <dbReference type="ChEBI" id="CHEBI:43474"/>
        <dbReference type="ChEBI" id="CHEBI:57720"/>
        <dbReference type="EC" id="2.4.2.2"/>
    </reaction>
</comment>
<comment type="catalytic activity">
    <reaction evidence="1">
        <text>xanthosine + phosphate = alpha-D-ribose 1-phosphate + xanthine</text>
        <dbReference type="Rhea" id="RHEA:27638"/>
        <dbReference type="ChEBI" id="CHEBI:17712"/>
        <dbReference type="ChEBI" id="CHEBI:18107"/>
        <dbReference type="ChEBI" id="CHEBI:43474"/>
        <dbReference type="ChEBI" id="CHEBI:57720"/>
        <dbReference type="EC" id="2.4.2.1"/>
    </reaction>
</comment>
<comment type="similarity">
    <text evidence="1">Belongs to the nucleoside phosphorylase PpnP family.</text>
</comment>
<evidence type="ECO:0000255" key="1">
    <source>
        <dbReference type="HAMAP-Rule" id="MF_01537"/>
    </source>
</evidence>
<proteinExistence type="inferred from homology"/>
<dbReference type="EC" id="2.4.2.1" evidence="1"/>
<dbReference type="EC" id="2.4.2.2" evidence="1"/>
<dbReference type="EMBL" id="CP000267">
    <property type="protein sequence ID" value="ABD70404.1"/>
    <property type="molecule type" value="Genomic_DNA"/>
</dbReference>
<dbReference type="RefSeq" id="WP_011464970.1">
    <property type="nucleotide sequence ID" value="NC_007908.1"/>
</dbReference>
<dbReference type="SMR" id="Q21UZ9"/>
<dbReference type="STRING" id="338969.Rfer_2688"/>
<dbReference type="KEGG" id="rfr:Rfer_2688"/>
<dbReference type="eggNOG" id="COG3123">
    <property type="taxonomic scope" value="Bacteria"/>
</dbReference>
<dbReference type="HOGENOM" id="CLU_157874_1_0_4"/>
<dbReference type="OrthoDB" id="9793848at2"/>
<dbReference type="Proteomes" id="UP000008332">
    <property type="component" value="Chromosome"/>
</dbReference>
<dbReference type="GO" id="GO:0005829">
    <property type="term" value="C:cytosol"/>
    <property type="evidence" value="ECO:0007669"/>
    <property type="project" value="TreeGrafter"/>
</dbReference>
<dbReference type="GO" id="GO:0047975">
    <property type="term" value="F:guanosine phosphorylase activity"/>
    <property type="evidence" value="ECO:0007669"/>
    <property type="project" value="UniProtKB-EC"/>
</dbReference>
<dbReference type="GO" id="GO:0004731">
    <property type="term" value="F:purine-nucleoside phosphorylase activity"/>
    <property type="evidence" value="ECO:0007669"/>
    <property type="project" value="UniProtKB-UniRule"/>
</dbReference>
<dbReference type="GO" id="GO:0009032">
    <property type="term" value="F:thymidine phosphorylase activity"/>
    <property type="evidence" value="ECO:0007669"/>
    <property type="project" value="UniProtKB-EC"/>
</dbReference>
<dbReference type="GO" id="GO:0004850">
    <property type="term" value="F:uridine phosphorylase activity"/>
    <property type="evidence" value="ECO:0007669"/>
    <property type="project" value="UniProtKB-EC"/>
</dbReference>
<dbReference type="CDD" id="cd20296">
    <property type="entry name" value="cupin_PpnP-like"/>
    <property type="match status" value="1"/>
</dbReference>
<dbReference type="Gene3D" id="2.60.120.10">
    <property type="entry name" value="Jelly Rolls"/>
    <property type="match status" value="1"/>
</dbReference>
<dbReference type="HAMAP" id="MF_01537">
    <property type="entry name" value="Nucleos_phosphorylase_PpnP"/>
    <property type="match status" value="1"/>
</dbReference>
<dbReference type="InterPro" id="IPR009664">
    <property type="entry name" value="Ppnp"/>
</dbReference>
<dbReference type="InterPro" id="IPR014710">
    <property type="entry name" value="RmlC-like_jellyroll"/>
</dbReference>
<dbReference type="InterPro" id="IPR011051">
    <property type="entry name" value="RmlC_Cupin_sf"/>
</dbReference>
<dbReference type="PANTHER" id="PTHR36540">
    <property type="entry name" value="PYRIMIDINE/PURINE NUCLEOSIDE PHOSPHORYLASE"/>
    <property type="match status" value="1"/>
</dbReference>
<dbReference type="PANTHER" id="PTHR36540:SF1">
    <property type="entry name" value="PYRIMIDINE_PURINE NUCLEOSIDE PHOSPHORYLASE"/>
    <property type="match status" value="1"/>
</dbReference>
<dbReference type="Pfam" id="PF06865">
    <property type="entry name" value="Ppnp"/>
    <property type="match status" value="1"/>
</dbReference>
<dbReference type="SUPFAM" id="SSF51182">
    <property type="entry name" value="RmlC-like cupins"/>
    <property type="match status" value="1"/>
</dbReference>
<reference key="1">
    <citation type="submission" date="2006-02" db="EMBL/GenBank/DDBJ databases">
        <title>Complete sequence of chromosome of Rhodoferax ferrireducens DSM 15236.</title>
        <authorList>
            <person name="Copeland A."/>
            <person name="Lucas S."/>
            <person name="Lapidus A."/>
            <person name="Barry K."/>
            <person name="Detter J.C."/>
            <person name="Glavina del Rio T."/>
            <person name="Hammon N."/>
            <person name="Israni S."/>
            <person name="Pitluck S."/>
            <person name="Brettin T."/>
            <person name="Bruce D."/>
            <person name="Han C."/>
            <person name="Tapia R."/>
            <person name="Gilna P."/>
            <person name="Kiss H."/>
            <person name="Schmutz J."/>
            <person name="Larimer F."/>
            <person name="Land M."/>
            <person name="Kyrpides N."/>
            <person name="Ivanova N."/>
            <person name="Richardson P."/>
        </authorList>
    </citation>
    <scope>NUCLEOTIDE SEQUENCE [LARGE SCALE GENOMIC DNA]</scope>
    <source>
        <strain>ATCC BAA-621 / DSM 15236 / T118</strain>
    </source>
</reference>
<organism>
    <name type="scientific">Albidiferax ferrireducens (strain ATCC BAA-621 / DSM 15236 / T118)</name>
    <name type="common">Rhodoferax ferrireducens</name>
    <dbReference type="NCBI Taxonomy" id="338969"/>
    <lineage>
        <taxon>Bacteria</taxon>
        <taxon>Pseudomonadati</taxon>
        <taxon>Pseudomonadota</taxon>
        <taxon>Betaproteobacteria</taxon>
        <taxon>Burkholderiales</taxon>
        <taxon>Comamonadaceae</taxon>
        <taxon>Rhodoferax</taxon>
    </lineage>
</organism>
<feature type="chain" id="PRO_0000298720" description="Pyrimidine/purine nucleoside phosphorylase">
    <location>
        <begin position="1"/>
        <end position="105"/>
    </location>
</feature>
<protein>
    <recommendedName>
        <fullName evidence="1">Pyrimidine/purine nucleoside phosphorylase</fullName>
        <ecNumber evidence="1">2.4.2.1</ecNumber>
        <ecNumber evidence="1">2.4.2.2</ecNumber>
    </recommendedName>
    <alternativeName>
        <fullName evidence="1">Adenosine phosphorylase</fullName>
    </alternativeName>
    <alternativeName>
        <fullName evidence="1">Cytidine phosphorylase</fullName>
    </alternativeName>
    <alternativeName>
        <fullName evidence="1">Guanosine phosphorylase</fullName>
    </alternativeName>
    <alternativeName>
        <fullName evidence="1">Inosine phosphorylase</fullName>
    </alternativeName>
    <alternativeName>
        <fullName evidence="1">Thymidine phosphorylase</fullName>
    </alternativeName>
    <alternativeName>
        <fullName evidence="1">Uridine phosphorylase</fullName>
    </alternativeName>
    <alternativeName>
        <fullName evidence="1">Xanthosine phosphorylase</fullName>
    </alternativeName>
</protein>
<accession>Q21UZ9</accession>
<name>PPNP_ALBFT</name>
<keyword id="KW-0328">Glycosyltransferase</keyword>
<keyword id="KW-1185">Reference proteome</keyword>
<keyword id="KW-0808">Transferase</keyword>
<gene>
    <name evidence="1" type="primary">ppnP</name>
    <name type="ordered locus">Rfer_2688</name>
</gene>